<name>ARNB_ECO55</name>
<proteinExistence type="inferred from homology"/>
<evidence type="ECO:0000255" key="1">
    <source>
        <dbReference type="HAMAP-Rule" id="MF_01167"/>
    </source>
</evidence>
<evidence type="ECO:0000305" key="2"/>
<protein>
    <recommendedName>
        <fullName evidence="1">UDP-4-amino-4-deoxy-L-arabinose--oxoglutarate aminotransferase</fullName>
        <ecNumber evidence="1">2.6.1.87</ecNumber>
    </recommendedName>
    <alternativeName>
        <fullName evidence="1">UDP-(beta-L-threo-pentapyranosyl-4''-ulose diphosphate) aminotransferase</fullName>
        <shortName evidence="1">UDP-Ara4O aminotransferase</shortName>
    </alternativeName>
    <alternativeName>
        <fullName evidence="1">UDP-4-amino-4-deoxy-L-arabinose aminotransferase</fullName>
    </alternativeName>
</protein>
<sequence>MSEFLPFSRPAMGVEELAAVKEVLESGWITTGPKNQALEQAFCQLTGNQHAIAVSSATAGMHITLMALEIGKGDEVITPSLTWVSTLNMISLLGATPVMVDVDRDTLMVTPEAIESAITPRTKAIIPVHYAGAPADIDAIRAIGERYGIAVIEDAAHAVGTYYKGRHIGAKGTAIFSFHAIKNITCAEGGLIVTDNENLARQLRMLKFHGLGVDAYDRQTWGRAPQAEVLTPGYKYNLTDINAAIALTQLAKLEHLNTRRREIAQQYQQALAALPFQPLSLPAWPHVHAWHLFIIRVDEQRCGISRDALMEALKERGIGTGLHFRAAHTQKYYRERFPTLSLPNTEWNSERICSLPLFPDMTTADADRVITALQQLAGQ</sequence>
<reference key="1">
    <citation type="journal article" date="2009" name="PLoS Genet.">
        <title>Organised genome dynamics in the Escherichia coli species results in highly diverse adaptive paths.</title>
        <authorList>
            <person name="Touchon M."/>
            <person name="Hoede C."/>
            <person name="Tenaillon O."/>
            <person name="Barbe V."/>
            <person name="Baeriswyl S."/>
            <person name="Bidet P."/>
            <person name="Bingen E."/>
            <person name="Bonacorsi S."/>
            <person name="Bouchier C."/>
            <person name="Bouvet O."/>
            <person name="Calteau A."/>
            <person name="Chiapello H."/>
            <person name="Clermont O."/>
            <person name="Cruveiller S."/>
            <person name="Danchin A."/>
            <person name="Diard M."/>
            <person name="Dossat C."/>
            <person name="Karoui M.E."/>
            <person name="Frapy E."/>
            <person name="Garry L."/>
            <person name="Ghigo J.M."/>
            <person name="Gilles A.M."/>
            <person name="Johnson J."/>
            <person name="Le Bouguenec C."/>
            <person name="Lescat M."/>
            <person name="Mangenot S."/>
            <person name="Martinez-Jehanne V."/>
            <person name="Matic I."/>
            <person name="Nassif X."/>
            <person name="Oztas S."/>
            <person name="Petit M.A."/>
            <person name="Pichon C."/>
            <person name="Rouy Z."/>
            <person name="Ruf C.S."/>
            <person name="Schneider D."/>
            <person name="Tourret J."/>
            <person name="Vacherie B."/>
            <person name="Vallenet D."/>
            <person name="Medigue C."/>
            <person name="Rocha E.P.C."/>
            <person name="Denamur E."/>
        </authorList>
    </citation>
    <scope>NUCLEOTIDE SEQUENCE [LARGE SCALE GENOMIC DNA]</scope>
    <source>
        <strain>55989 / EAEC</strain>
    </source>
</reference>
<organism>
    <name type="scientific">Escherichia coli (strain 55989 / EAEC)</name>
    <dbReference type="NCBI Taxonomy" id="585055"/>
    <lineage>
        <taxon>Bacteria</taxon>
        <taxon>Pseudomonadati</taxon>
        <taxon>Pseudomonadota</taxon>
        <taxon>Gammaproteobacteria</taxon>
        <taxon>Enterobacterales</taxon>
        <taxon>Enterobacteriaceae</taxon>
        <taxon>Escherichia</taxon>
    </lineage>
</organism>
<keyword id="KW-0032">Aminotransferase</keyword>
<keyword id="KW-0046">Antibiotic resistance</keyword>
<keyword id="KW-0441">Lipid A biosynthesis</keyword>
<keyword id="KW-0444">Lipid biosynthesis</keyword>
<keyword id="KW-0443">Lipid metabolism</keyword>
<keyword id="KW-0448">Lipopolysaccharide biosynthesis</keyword>
<keyword id="KW-0663">Pyridoxal phosphate</keyword>
<keyword id="KW-1185">Reference proteome</keyword>
<keyword id="KW-0808">Transferase</keyword>
<comment type="function">
    <text evidence="1">Catalyzes the conversion of UDP-4-keto-arabinose (UDP-Ara4O) to UDP-4-amino-4-deoxy-L-arabinose (UDP-L-Ara4N). The modified arabinose is attached to lipid A and is required for resistance to polymyxin and cationic antimicrobial peptides.</text>
</comment>
<comment type="catalytic activity">
    <reaction evidence="1">
        <text>UDP-4-amino-4-deoxy-beta-L-arabinose + 2-oxoglutarate = UDP-beta-L-threo-pentopyranos-4-ulose + L-glutamate</text>
        <dbReference type="Rhea" id="RHEA:24710"/>
        <dbReference type="ChEBI" id="CHEBI:16810"/>
        <dbReference type="ChEBI" id="CHEBI:29985"/>
        <dbReference type="ChEBI" id="CHEBI:58708"/>
        <dbReference type="ChEBI" id="CHEBI:58710"/>
        <dbReference type="EC" id="2.6.1.87"/>
    </reaction>
</comment>
<comment type="cofactor">
    <cofactor evidence="1">
        <name>pyridoxal 5'-phosphate</name>
        <dbReference type="ChEBI" id="CHEBI:597326"/>
    </cofactor>
</comment>
<comment type="pathway">
    <text evidence="1">Nucleotide-sugar biosynthesis; UDP-4-deoxy-4-formamido-beta-L-arabinose biosynthesis; UDP-4-deoxy-4-formamido-beta-L-arabinose from UDP-alpha-D-glucuronate: step 2/3.</text>
</comment>
<comment type="pathway">
    <text evidence="1">Bacterial outer membrane biogenesis; lipopolysaccharide biosynthesis.</text>
</comment>
<comment type="subunit">
    <text evidence="1">Homodimer.</text>
</comment>
<comment type="similarity">
    <text evidence="1">Belongs to the DegT/DnrJ/EryC1 family. ArnB subfamily.</text>
</comment>
<comment type="sequence caution" evidence="2">
    <conflict type="erroneous initiation">
        <sequence resource="EMBL-CDS" id="CAU98368"/>
    </conflict>
</comment>
<gene>
    <name evidence="1" type="primary">arnB</name>
    <name type="ordered locus">EC55989_2499</name>
</gene>
<accession>B7LAR8</accession>
<feature type="chain" id="PRO_0000380524" description="UDP-4-amino-4-deoxy-L-arabinose--oxoglutarate aminotransferase">
    <location>
        <begin position="1"/>
        <end position="379"/>
    </location>
</feature>
<feature type="modified residue" description="N6-(pyridoxal phosphate)lysine" evidence="1">
    <location>
        <position position="182"/>
    </location>
</feature>
<dbReference type="EC" id="2.6.1.87" evidence="1"/>
<dbReference type="EMBL" id="CU928145">
    <property type="protein sequence ID" value="CAU98368.1"/>
    <property type="status" value="ALT_INIT"/>
    <property type="molecule type" value="Genomic_DNA"/>
</dbReference>
<dbReference type="RefSeq" id="WP_001388277.1">
    <property type="nucleotide sequence ID" value="NC_011748.1"/>
</dbReference>
<dbReference type="SMR" id="B7LAR8"/>
<dbReference type="GeneID" id="93774921"/>
<dbReference type="KEGG" id="eck:EC55989_2499"/>
<dbReference type="HOGENOM" id="CLU_033332_0_3_6"/>
<dbReference type="UniPathway" id="UPA00030"/>
<dbReference type="UniPathway" id="UPA00032">
    <property type="reaction ID" value="UER00493"/>
</dbReference>
<dbReference type="Proteomes" id="UP000000746">
    <property type="component" value="Chromosome"/>
</dbReference>
<dbReference type="GO" id="GO:0016020">
    <property type="term" value="C:membrane"/>
    <property type="evidence" value="ECO:0007669"/>
    <property type="project" value="GOC"/>
</dbReference>
<dbReference type="GO" id="GO:0030170">
    <property type="term" value="F:pyridoxal phosphate binding"/>
    <property type="evidence" value="ECO:0007669"/>
    <property type="project" value="TreeGrafter"/>
</dbReference>
<dbReference type="GO" id="GO:0099620">
    <property type="term" value="F:UDP-4-amino-4-deoxy-L-arabinose aminotransferase"/>
    <property type="evidence" value="ECO:0007669"/>
    <property type="project" value="UniProtKB-EC"/>
</dbReference>
<dbReference type="GO" id="GO:0009245">
    <property type="term" value="P:lipid A biosynthetic process"/>
    <property type="evidence" value="ECO:0007669"/>
    <property type="project" value="UniProtKB-KW"/>
</dbReference>
<dbReference type="GO" id="GO:0009103">
    <property type="term" value="P:lipopolysaccharide biosynthetic process"/>
    <property type="evidence" value="ECO:0007669"/>
    <property type="project" value="UniProtKB-UniRule"/>
</dbReference>
<dbReference type="GO" id="GO:0046677">
    <property type="term" value="P:response to antibiotic"/>
    <property type="evidence" value="ECO:0007669"/>
    <property type="project" value="UniProtKB-KW"/>
</dbReference>
<dbReference type="CDD" id="cd00616">
    <property type="entry name" value="AHBA_syn"/>
    <property type="match status" value="1"/>
</dbReference>
<dbReference type="FunFam" id="3.40.640.10:FF:000040">
    <property type="entry name" value="UDP-4-amino-4-deoxy-L-arabinose--oxoglutarate aminotransferase"/>
    <property type="match status" value="1"/>
</dbReference>
<dbReference type="FunFam" id="3.90.1150.10:FF:000030">
    <property type="entry name" value="UDP-4-amino-4-deoxy-L-arabinose--oxoglutarate aminotransferase"/>
    <property type="match status" value="1"/>
</dbReference>
<dbReference type="Gene3D" id="3.90.1150.10">
    <property type="entry name" value="Aspartate Aminotransferase, domain 1"/>
    <property type="match status" value="1"/>
</dbReference>
<dbReference type="Gene3D" id="3.40.640.10">
    <property type="entry name" value="Type I PLP-dependent aspartate aminotransferase-like (Major domain)"/>
    <property type="match status" value="1"/>
</dbReference>
<dbReference type="HAMAP" id="MF_01167">
    <property type="entry name" value="ArnB_transfer"/>
    <property type="match status" value="1"/>
</dbReference>
<dbReference type="InterPro" id="IPR022850">
    <property type="entry name" value="ArnB_NH2Trfase"/>
</dbReference>
<dbReference type="InterPro" id="IPR000653">
    <property type="entry name" value="DegT/StrS_aminotransferase"/>
</dbReference>
<dbReference type="InterPro" id="IPR015424">
    <property type="entry name" value="PyrdxlP-dep_Trfase"/>
</dbReference>
<dbReference type="InterPro" id="IPR015421">
    <property type="entry name" value="PyrdxlP-dep_Trfase_major"/>
</dbReference>
<dbReference type="InterPro" id="IPR015422">
    <property type="entry name" value="PyrdxlP-dep_Trfase_small"/>
</dbReference>
<dbReference type="NCBIfam" id="NF008658">
    <property type="entry name" value="PRK11658.1"/>
    <property type="match status" value="1"/>
</dbReference>
<dbReference type="PANTHER" id="PTHR30244">
    <property type="entry name" value="TRANSAMINASE"/>
    <property type="match status" value="1"/>
</dbReference>
<dbReference type="PANTHER" id="PTHR30244:SF41">
    <property type="entry name" value="UDP-4-AMINO-4-DEOXY-L-ARABINOSE--OXOGLUTARATE AMINOTRANSFERASE"/>
    <property type="match status" value="1"/>
</dbReference>
<dbReference type="Pfam" id="PF01041">
    <property type="entry name" value="DegT_DnrJ_EryC1"/>
    <property type="match status" value="1"/>
</dbReference>
<dbReference type="PIRSF" id="PIRSF000390">
    <property type="entry name" value="PLP_StrS"/>
    <property type="match status" value="1"/>
</dbReference>
<dbReference type="SUPFAM" id="SSF53383">
    <property type="entry name" value="PLP-dependent transferases"/>
    <property type="match status" value="1"/>
</dbReference>